<proteinExistence type="inferred from homology"/>
<sequence>MNNPSTTKAPLADYLAHLPLAEEERERLGESASFSELHARLAGAEGAAADAGGDPALASVRARLQLGTPELDDAEMFGVDAQGRTFLKISPPIRRTKVIPEPWRTNILVRGWRRLTGRSNPPKPKRALPRARWQRVGSLRRFILLLLMLAQTSVATYYMKGILPYQGWAFVDLEELAQQSLLDTVQQVLPYVIQFGILALFAILFCWVSAGFWTALMGFWELLTGRDRYRISGSSAGSEPIAADARTAIVMPICNEDVPRVFAGLRATVESMAATGEMERFDFFVLSDTNDPDIAVAEQQAWLELCRETKGFGKIFYRRRRRRVKRKSGNIDDFCRRWGGDYRYMVVMDADSVMSGDCLAKLVRLMEANPEAGIIQTAPKASGMDTLYARMQQFATRVYGPLFTAGLHFWQLGESHYWGHNAIIRMQPFIDHCALAPLPGKGSFAGAILSHDFVEAALMRRAGWGVWIAYDLDGSYEELPPNLLDELKRDRRWCHGNLMNFRLFLVKGMHPVHRAVFLTGVMSYLSAPLWFFFLVLSTALLAVHQLMEPQYFLEPRQLFPIWPQWHPEKAIALFSTTLTLLFLPKLLSVMLIWAKGAKGFGGVIRVTLSMLLEMFFSVLLAPVRMLFHTRFVLAAFLGWSVQWNSPQRDDDATPWSEAIRRHGMQTLLGIAWTLLVAWLNPRFLWWLSPIVGSLILSIPVSVISSRVKLGLRARDEKLFLIPEEYDTPRELRATDEYTYENRWHALKDGFLKAAVDPLLNALACAMGTARHNRAQAIETVRGERIGKAIDKGPEQLDGATRLALLSDPVALSRLHTRVWEEDRDDWLGRWRKAEADDPHAASVPLAQVVPGDAGLLPAAQS</sequence>
<keyword id="KW-0997">Cell inner membrane</keyword>
<keyword id="KW-1003">Cell membrane</keyword>
<keyword id="KW-0328">Glycosyltransferase</keyword>
<keyword id="KW-0472">Membrane</keyword>
<keyword id="KW-0808">Transferase</keyword>
<keyword id="KW-0812">Transmembrane</keyword>
<keyword id="KW-1133">Transmembrane helix</keyword>
<dbReference type="EC" id="2.4.1.-" evidence="1"/>
<dbReference type="EMBL" id="FM209186">
    <property type="protein sequence ID" value="CAW30221.1"/>
    <property type="molecule type" value="Genomic_DNA"/>
</dbReference>
<dbReference type="CAZy" id="GT2">
    <property type="family name" value="Glycosyltransferase Family 2"/>
</dbReference>
<dbReference type="KEGG" id="pag:PLES_54671"/>
<dbReference type="HOGENOM" id="CLU_015730_0_0_6"/>
<dbReference type="UniPathway" id="UPA00637"/>
<dbReference type="GO" id="GO:0005886">
    <property type="term" value="C:plasma membrane"/>
    <property type="evidence" value="ECO:0007669"/>
    <property type="project" value="UniProtKB-SubCell"/>
</dbReference>
<dbReference type="GO" id="GO:0016758">
    <property type="term" value="F:hexosyltransferase activity"/>
    <property type="evidence" value="ECO:0007669"/>
    <property type="project" value="UniProtKB-UniRule"/>
</dbReference>
<dbReference type="GO" id="GO:0009250">
    <property type="term" value="P:glucan biosynthetic process"/>
    <property type="evidence" value="ECO:0007669"/>
    <property type="project" value="UniProtKB-UniRule"/>
</dbReference>
<dbReference type="CDD" id="cd04191">
    <property type="entry name" value="Glucan_BSP_MdoH"/>
    <property type="match status" value="1"/>
</dbReference>
<dbReference type="FunFam" id="3.90.550.10:FF:000047">
    <property type="entry name" value="Glucans biosynthesis glucosyltransferase H"/>
    <property type="match status" value="1"/>
</dbReference>
<dbReference type="Gene3D" id="3.90.550.10">
    <property type="entry name" value="Spore Coat Polysaccharide Biosynthesis Protein SpsA, Chain A"/>
    <property type="match status" value="1"/>
</dbReference>
<dbReference type="HAMAP" id="MF_01072">
    <property type="entry name" value="MdoH_OpgH"/>
    <property type="match status" value="1"/>
</dbReference>
<dbReference type="InterPro" id="IPR023725">
    <property type="entry name" value="Glucans_biosynth_gluTrFase_H"/>
</dbReference>
<dbReference type="InterPro" id="IPR001173">
    <property type="entry name" value="Glyco_trans_2-like"/>
</dbReference>
<dbReference type="InterPro" id="IPR050321">
    <property type="entry name" value="Glycosyltr_2/OpgH_subfam"/>
</dbReference>
<dbReference type="InterPro" id="IPR029044">
    <property type="entry name" value="Nucleotide-diphossugar_trans"/>
</dbReference>
<dbReference type="NCBIfam" id="NF003955">
    <property type="entry name" value="PRK05454.1-1"/>
    <property type="match status" value="1"/>
</dbReference>
<dbReference type="NCBIfam" id="NF003958">
    <property type="entry name" value="PRK05454.2-1"/>
    <property type="match status" value="1"/>
</dbReference>
<dbReference type="NCBIfam" id="NF003962">
    <property type="entry name" value="PRK05454.2-5"/>
    <property type="match status" value="1"/>
</dbReference>
<dbReference type="PANTHER" id="PTHR43867">
    <property type="entry name" value="CELLULOSE SYNTHASE CATALYTIC SUBUNIT A [UDP-FORMING]"/>
    <property type="match status" value="1"/>
</dbReference>
<dbReference type="PANTHER" id="PTHR43867:SF5">
    <property type="entry name" value="GLUCANS BIOSYNTHESIS GLUCOSYLTRANSFERASE H"/>
    <property type="match status" value="1"/>
</dbReference>
<dbReference type="Pfam" id="PF00535">
    <property type="entry name" value="Glycos_transf_2"/>
    <property type="match status" value="1"/>
</dbReference>
<dbReference type="SUPFAM" id="SSF53448">
    <property type="entry name" value="Nucleotide-diphospho-sugar transferases"/>
    <property type="match status" value="1"/>
</dbReference>
<name>OPGH_PSEA8</name>
<comment type="function">
    <text evidence="1">Involved in the biosynthesis of osmoregulated periplasmic glucans (OPGs).</text>
</comment>
<comment type="pathway">
    <text evidence="1">Glycan metabolism; osmoregulated periplasmic glucan (OPG) biosynthesis.</text>
</comment>
<comment type="subcellular location">
    <subcellularLocation>
        <location evidence="1">Cell inner membrane</location>
        <topology evidence="1">Multi-pass membrane protein</topology>
    </subcellularLocation>
</comment>
<comment type="similarity">
    <text evidence="1">Belongs to the glycosyltransferase 2 family. OpgH subfamily.</text>
</comment>
<feature type="chain" id="PRO_1000136657" description="Glucans biosynthesis glucosyltransferase H">
    <location>
        <begin position="1"/>
        <end position="861"/>
    </location>
</feature>
<feature type="transmembrane region" description="Helical" evidence="1">
    <location>
        <begin position="142"/>
        <end position="162"/>
    </location>
</feature>
<feature type="transmembrane region" description="Helical" evidence="1">
    <location>
        <begin position="188"/>
        <end position="208"/>
    </location>
</feature>
<feature type="transmembrane region" description="Helical" evidence="1">
    <location>
        <begin position="516"/>
        <end position="536"/>
    </location>
</feature>
<feature type="transmembrane region" description="Helical" evidence="1">
    <location>
        <begin position="573"/>
        <end position="593"/>
    </location>
</feature>
<feature type="transmembrane region" description="Helical" evidence="1">
    <location>
        <begin position="600"/>
        <end position="620"/>
    </location>
</feature>
<feature type="transmembrane region" description="Helical" evidence="1">
    <location>
        <begin position="683"/>
        <end position="703"/>
    </location>
</feature>
<organism>
    <name type="scientific">Pseudomonas aeruginosa (strain LESB58)</name>
    <dbReference type="NCBI Taxonomy" id="557722"/>
    <lineage>
        <taxon>Bacteria</taxon>
        <taxon>Pseudomonadati</taxon>
        <taxon>Pseudomonadota</taxon>
        <taxon>Gammaproteobacteria</taxon>
        <taxon>Pseudomonadales</taxon>
        <taxon>Pseudomonadaceae</taxon>
        <taxon>Pseudomonas</taxon>
    </lineage>
</organism>
<reference key="1">
    <citation type="journal article" date="2009" name="Genome Res.">
        <title>Newly introduced genomic prophage islands are critical determinants of in vivo competitiveness in the Liverpool epidemic strain of Pseudomonas aeruginosa.</title>
        <authorList>
            <person name="Winstanley C."/>
            <person name="Langille M.G.I."/>
            <person name="Fothergill J.L."/>
            <person name="Kukavica-Ibrulj I."/>
            <person name="Paradis-Bleau C."/>
            <person name="Sanschagrin F."/>
            <person name="Thomson N.R."/>
            <person name="Winsor G.L."/>
            <person name="Quail M.A."/>
            <person name="Lennard N."/>
            <person name="Bignell A."/>
            <person name="Clarke L."/>
            <person name="Seeger K."/>
            <person name="Saunders D."/>
            <person name="Harris D."/>
            <person name="Parkhill J."/>
            <person name="Hancock R.E.W."/>
            <person name="Brinkman F.S.L."/>
            <person name="Levesque R.C."/>
        </authorList>
    </citation>
    <scope>NUCLEOTIDE SEQUENCE [LARGE SCALE GENOMIC DNA]</scope>
    <source>
        <strain>LESB58</strain>
    </source>
</reference>
<gene>
    <name evidence="1" type="primary">opgH</name>
    <name type="ordered locus">PLES_54671</name>
</gene>
<accession>B7V3H0</accession>
<evidence type="ECO:0000255" key="1">
    <source>
        <dbReference type="HAMAP-Rule" id="MF_01072"/>
    </source>
</evidence>
<protein>
    <recommendedName>
        <fullName evidence="1">Glucans biosynthesis glucosyltransferase H</fullName>
        <ecNumber evidence="1">2.4.1.-</ecNumber>
    </recommendedName>
</protein>